<proteinExistence type="inferred from homology"/>
<protein>
    <recommendedName>
        <fullName>Flagellar biosynthesis protein FlhF</fullName>
    </recommendedName>
    <alternativeName>
        <fullName>Flagella-associated GTP-binding protein</fullName>
    </alternativeName>
</protein>
<keyword id="KW-1005">Bacterial flagellum biogenesis</keyword>
<keyword id="KW-1006">Bacterial flagellum protein export</keyword>
<keyword id="KW-1003">Cell membrane</keyword>
<keyword id="KW-0342">GTP-binding</keyword>
<keyword id="KW-0472">Membrane</keyword>
<keyword id="KW-0547">Nucleotide-binding</keyword>
<keyword id="KW-0653">Protein transport</keyword>
<keyword id="KW-1185">Reference proteome</keyword>
<keyword id="KW-0813">Transport</keyword>
<sequence length="484" mass="55356">MGQLIHTFTVEDTEQIIPKVKEDYGDKALIITNKQIRPKTLNRSALYEVMVAIEESDYEEHLKKQGKSLPAKKSSPKPSSTSLAEEKIRSQIPQEDEDVVLDFSNTRLNTNLNTVKNNDLAKKTYQDFPQNKINPHQNKTLGFDDFKEKLSEVSNEISKVTNTPLENYTPNPNYNKKIENFEKQFEKQINKLNDKIDLLADMMWDDKAEARKNLMIPPEFASIYKQAKESGMLENHLEAIMKATIENMPAAMKTNKDAVQRYFHSLLRNILPCRVESDIKKQKIMMLVGPTGVGKTTTLAKLAFRYAYGDKRYKTGIITLDTYRIGAVEQLFQYAKMMKLPIIDSIEPKDLDEAIKSLNNCEVILVDTIGNSQYDQSKLAKTKEFLMHSNAEIDVNLVVSANTKHEDLMEIYKNFSFLNIDTLIITKFDETKVFGNIFSLVYETNIPLSFFSIGQEVPDDLEVANSDFLVHCILEGFNKGKNNE</sequence>
<gene>
    <name type="primary">flhF</name>
    <name type="ordered locus">Cj0064c</name>
</gene>
<evidence type="ECO:0000250" key="1"/>
<evidence type="ECO:0000256" key="2">
    <source>
        <dbReference type="SAM" id="MobiDB-lite"/>
    </source>
</evidence>
<evidence type="ECO:0000305" key="3"/>
<dbReference type="EMBL" id="AL111168">
    <property type="protein sequence ID" value="CAL34238.1"/>
    <property type="molecule type" value="Genomic_DNA"/>
</dbReference>
<dbReference type="EMBL" id="AJ000857">
    <property type="protein sequence ID" value="CAA04334.1"/>
    <property type="molecule type" value="Genomic_DNA"/>
</dbReference>
<dbReference type="PIR" id="D81422">
    <property type="entry name" value="D81422"/>
</dbReference>
<dbReference type="RefSeq" id="WP_002851941.1">
    <property type="nucleotide sequence ID" value="NZ_SZUC01000005.1"/>
</dbReference>
<dbReference type="RefSeq" id="YP_002343528.1">
    <property type="nucleotide sequence ID" value="NC_002163.1"/>
</dbReference>
<dbReference type="SMR" id="O52908"/>
<dbReference type="IntAct" id="O52908">
    <property type="interactions" value="5"/>
</dbReference>
<dbReference type="STRING" id="192222.Cj0064c"/>
<dbReference type="PaxDb" id="192222-Cj0064c"/>
<dbReference type="EnsemblBacteria" id="CAL34238">
    <property type="protein sequence ID" value="CAL34238"/>
    <property type="gene ID" value="Cj0064c"/>
</dbReference>
<dbReference type="GeneID" id="904464"/>
<dbReference type="KEGG" id="cje:Cj0064c"/>
<dbReference type="PATRIC" id="fig|192222.6.peg.63"/>
<dbReference type="eggNOG" id="COG1419">
    <property type="taxonomic scope" value="Bacteria"/>
</dbReference>
<dbReference type="HOGENOM" id="CLU_009301_11_3_7"/>
<dbReference type="OrthoDB" id="9778554at2"/>
<dbReference type="PHI-base" id="PHI:8627"/>
<dbReference type="Proteomes" id="UP000000799">
    <property type="component" value="Chromosome"/>
</dbReference>
<dbReference type="GO" id="GO:0005886">
    <property type="term" value="C:plasma membrane"/>
    <property type="evidence" value="ECO:0007669"/>
    <property type="project" value="UniProtKB-SubCell"/>
</dbReference>
<dbReference type="GO" id="GO:0016887">
    <property type="term" value="F:ATP hydrolysis activity"/>
    <property type="evidence" value="ECO:0007669"/>
    <property type="project" value="InterPro"/>
</dbReference>
<dbReference type="GO" id="GO:0005525">
    <property type="term" value="F:GTP binding"/>
    <property type="evidence" value="ECO:0007669"/>
    <property type="project" value="UniProtKB-KW"/>
</dbReference>
<dbReference type="GO" id="GO:0003924">
    <property type="term" value="F:GTPase activity"/>
    <property type="evidence" value="ECO:0007669"/>
    <property type="project" value="InterPro"/>
</dbReference>
<dbReference type="GO" id="GO:0005047">
    <property type="term" value="F:signal recognition particle binding"/>
    <property type="evidence" value="ECO:0007669"/>
    <property type="project" value="TreeGrafter"/>
</dbReference>
<dbReference type="GO" id="GO:0044781">
    <property type="term" value="P:bacterial-type flagellum organization"/>
    <property type="evidence" value="ECO:0007669"/>
    <property type="project" value="UniProtKB-KW"/>
</dbReference>
<dbReference type="GO" id="GO:0015031">
    <property type="term" value="P:protein transport"/>
    <property type="evidence" value="ECO:0007669"/>
    <property type="project" value="UniProtKB-KW"/>
</dbReference>
<dbReference type="GO" id="GO:0006614">
    <property type="term" value="P:SRP-dependent cotranslational protein targeting to membrane"/>
    <property type="evidence" value="ECO:0007669"/>
    <property type="project" value="InterPro"/>
</dbReference>
<dbReference type="CDD" id="cd17873">
    <property type="entry name" value="FlhF"/>
    <property type="match status" value="1"/>
</dbReference>
<dbReference type="FunFam" id="3.40.50.300:FF:000695">
    <property type="entry name" value="Flagellar biosynthesis regulator FlhF"/>
    <property type="match status" value="1"/>
</dbReference>
<dbReference type="Gene3D" id="1.20.120.1380">
    <property type="entry name" value="Flagellar FlhF biosynthesis protein, N domain"/>
    <property type="match status" value="1"/>
</dbReference>
<dbReference type="Gene3D" id="3.40.50.300">
    <property type="entry name" value="P-loop containing nucleotide triphosphate hydrolases"/>
    <property type="match status" value="1"/>
</dbReference>
<dbReference type="InterPro" id="IPR003593">
    <property type="entry name" value="AAA+_ATPase"/>
</dbReference>
<dbReference type="InterPro" id="IPR020006">
    <property type="entry name" value="FlhF"/>
</dbReference>
<dbReference type="InterPro" id="IPR047040">
    <property type="entry name" value="FlhF__GTPase_dom"/>
</dbReference>
<dbReference type="InterPro" id="IPR027417">
    <property type="entry name" value="P-loop_NTPase"/>
</dbReference>
<dbReference type="InterPro" id="IPR000897">
    <property type="entry name" value="SRP54_GTPase_dom"/>
</dbReference>
<dbReference type="NCBIfam" id="TIGR03499">
    <property type="entry name" value="FlhF"/>
    <property type="match status" value="1"/>
</dbReference>
<dbReference type="PANTHER" id="PTHR43134:SF3">
    <property type="entry name" value="FLAGELLAR BIOSYNTHESIS PROTEIN FLHF"/>
    <property type="match status" value="1"/>
</dbReference>
<dbReference type="PANTHER" id="PTHR43134">
    <property type="entry name" value="SIGNAL RECOGNITION PARTICLE RECEPTOR SUBUNIT ALPHA"/>
    <property type="match status" value="1"/>
</dbReference>
<dbReference type="Pfam" id="PF00448">
    <property type="entry name" value="SRP54"/>
    <property type="match status" value="1"/>
</dbReference>
<dbReference type="SMART" id="SM00382">
    <property type="entry name" value="AAA"/>
    <property type="match status" value="1"/>
</dbReference>
<dbReference type="SMART" id="SM00962">
    <property type="entry name" value="SRP54"/>
    <property type="match status" value="1"/>
</dbReference>
<dbReference type="SUPFAM" id="SSF52540">
    <property type="entry name" value="P-loop containing nucleoside triphosphate hydrolases"/>
    <property type="match status" value="1"/>
</dbReference>
<feature type="chain" id="PRO_0000101222" description="Flagellar biosynthesis protein FlhF">
    <location>
        <begin position="1"/>
        <end position="484"/>
    </location>
</feature>
<feature type="region of interest" description="Disordered" evidence="2">
    <location>
        <begin position="64"/>
        <end position="91"/>
    </location>
</feature>
<feature type="compositionally biased region" description="Low complexity" evidence="2">
    <location>
        <begin position="67"/>
        <end position="83"/>
    </location>
</feature>
<feature type="binding site" evidence="1">
    <location>
        <begin position="289"/>
        <end position="296"/>
    </location>
    <ligand>
        <name>GTP</name>
        <dbReference type="ChEBI" id="CHEBI:37565"/>
    </ligand>
</feature>
<feature type="binding site" evidence="1">
    <location>
        <begin position="367"/>
        <end position="371"/>
    </location>
    <ligand>
        <name>GTP</name>
        <dbReference type="ChEBI" id="CHEBI:37565"/>
    </ligand>
</feature>
<feature type="binding site" evidence="1">
    <location>
        <begin position="426"/>
        <end position="429"/>
    </location>
    <ligand>
        <name>GTP</name>
        <dbReference type="ChEBI" id="CHEBI:37565"/>
    </ligand>
</feature>
<feature type="sequence conflict" description="In Ref. 2; CAA04334." evidence="3" ref="2">
    <original>Y</original>
    <variation>T</variation>
    <location>
        <position position="374"/>
    </location>
</feature>
<feature type="sequence conflict" description="In Ref. 2; CAA04334." evidence="3" ref="2">
    <original>S</original>
    <variation>I</variation>
    <location>
        <position position="377"/>
    </location>
</feature>
<feature type="sequence conflict" description="In Ref. 2; CAA04334." evidence="3" ref="2">
    <original>CILEGFNKGKNNE</original>
    <variation>WYFRRV</variation>
    <location>
        <begin position="472"/>
        <end position="484"/>
    </location>
</feature>
<comment type="function">
    <text evidence="1">Necessary for flagellar biosynthesis. May be involved in translocation of the flagellum (By similarity).</text>
</comment>
<comment type="subcellular location">
    <subcellularLocation>
        <location evidence="1">Cell membrane</location>
        <topology evidence="1">Peripheral membrane protein</topology>
        <orientation evidence="1">Cytoplasmic side</orientation>
    </subcellularLocation>
</comment>
<comment type="similarity">
    <text evidence="3">Belongs to the GTP-binding SRP family.</text>
</comment>
<organism>
    <name type="scientific">Campylobacter jejuni subsp. jejuni serotype O:2 (strain ATCC 700819 / NCTC 11168)</name>
    <dbReference type="NCBI Taxonomy" id="192222"/>
    <lineage>
        <taxon>Bacteria</taxon>
        <taxon>Pseudomonadati</taxon>
        <taxon>Campylobacterota</taxon>
        <taxon>Epsilonproteobacteria</taxon>
        <taxon>Campylobacterales</taxon>
        <taxon>Campylobacteraceae</taxon>
        <taxon>Campylobacter</taxon>
    </lineage>
</organism>
<accession>O52908</accession>
<accession>Q0PC69</accession>
<accession>Q9PJ55</accession>
<name>FLHF_CAMJE</name>
<reference key="1">
    <citation type="journal article" date="2000" name="Nature">
        <title>The genome sequence of the food-borne pathogen Campylobacter jejuni reveals hypervariable sequences.</title>
        <authorList>
            <person name="Parkhill J."/>
            <person name="Wren B.W."/>
            <person name="Mungall K.L."/>
            <person name="Ketley J.M."/>
            <person name="Churcher C.M."/>
            <person name="Basham D."/>
            <person name="Chillingworth T."/>
            <person name="Davies R.M."/>
            <person name="Feltwell T."/>
            <person name="Holroyd S."/>
            <person name="Jagels K."/>
            <person name="Karlyshev A.V."/>
            <person name="Moule S."/>
            <person name="Pallen M.J."/>
            <person name="Penn C.W."/>
            <person name="Quail M.A."/>
            <person name="Rajandream M.A."/>
            <person name="Rutherford K.M."/>
            <person name="van Vliet A.H.M."/>
            <person name="Whitehead S."/>
            <person name="Barrell B.G."/>
        </authorList>
    </citation>
    <scope>NUCLEOTIDE SEQUENCE [LARGE SCALE GENOMIC DNA]</scope>
    <source>
        <strain>ATCC 700819 / NCTC 11168</strain>
    </source>
</reference>
<reference key="2">
    <citation type="submission" date="1997-08" db="EMBL/GenBank/DDBJ databases">
        <title>Cloning and characterisation of flhF gene of C. jejuni.</title>
        <authorList>
            <person name="Karlyshev A.V."/>
            <person name="Wren B.W."/>
        </authorList>
    </citation>
    <scope>NUCLEOTIDE SEQUENCE [GENOMIC DNA] OF 374-484</scope>
    <source>
        <strain>ATCC 700819 / NCTC 11168</strain>
    </source>
</reference>